<proteinExistence type="evidence at protein level"/>
<name>ZN630_HUMAN</name>
<keyword id="KW-0025">Alternative splicing</keyword>
<keyword id="KW-0238">DNA-binding</keyword>
<keyword id="KW-0479">Metal-binding</keyword>
<keyword id="KW-0539">Nucleus</keyword>
<keyword id="KW-1267">Proteomics identification</keyword>
<keyword id="KW-1185">Reference proteome</keyword>
<keyword id="KW-0677">Repeat</keyword>
<keyword id="KW-0804">Transcription</keyword>
<keyword id="KW-0805">Transcription regulation</keyword>
<keyword id="KW-0862">Zinc</keyword>
<keyword id="KW-0863">Zinc-finger</keyword>
<organism>
    <name type="scientific">Homo sapiens</name>
    <name type="common">Human</name>
    <dbReference type="NCBI Taxonomy" id="9606"/>
    <lineage>
        <taxon>Eukaryota</taxon>
        <taxon>Metazoa</taxon>
        <taxon>Chordata</taxon>
        <taxon>Craniata</taxon>
        <taxon>Vertebrata</taxon>
        <taxon>Euteleostomi</taxon>
        <taxon>Mammalia</taxon>
        <taxon>Eutheria</taxon>
        <taxon>Euarchontoglires</taxon>
        <taxon>Primates</taxon>
        <taxon>Haplorrhini</taxon>
        <taxon>Catarrhini</taxon>
        <taxon>Hominidae</taxon>
        <taxon>Homo</taxon>
    </lineage>
</organism>
<comment type="function">
    <text>May be involved in transcriptional regulation.</text>
</comment>
<comment type="subcellular location">
    <subcellularLocation>
        <location evidence="4">Nucleus</location>
    </subcellularLocation>
</comment>
<comment type="alternative products">
    <event type="alternative splicing"/>
    <isoform>
        <id>Q2M218-1</id>
        <name>1</name>
        <sequence type="displayed"/>
    </isoform>
    <isoform>
        <id>Q2M218-2</id>
        <name>2</name>
        <sequence type="described" ref="VSP_046855"/>
    </isoform>
</comment>
<comment type="similarity">
    <text evidence="4">Belongs to the krueppel C2H2-type zinc-finger protein family.</text>
</comment>
<reference key="1">
    <citation type="journal article" date="2005" name="Nature">
        <title>The DNA sequence of the human X chromosome.</title>
        <authorList>
            <person name="Ross M.T."/>
            <person name="Grafham D.V."/>
            <person name="Coffey A.J."/>
            <person name="Scherer S."/>
            <person name="McLay K."/>
            <person name="Muzny D."/>
            <person name="Platzer M."/>
            <person name="Howell G.R."/>
            <person name="Burrows C."/>
            <person name="Bird C.P."/>
            <person name="Frankish A."/>
            <person name="Lovell F.L."/>
            <person name="Howe K.L."/>
            <person name="Ashurst J.L."/>
            <person name="Fulton R.S."/>
            <person name="Sudbrak R."/>
            <person name="Wen G."/>
            <person name="Jones M.C."/>
            <person name="Hurles M.E."/>
            <person name="Andrews T.D."/>
            <person name="Scott C.E."/>
            <person name="Searle S."/>
            <person name="Ramser J."/>
            <person name="Whittaker A."/>
            <person name="Deadman R."/>
            <person name="Carter N.P."/>
            <person name="Hunt S.E."/>
            <person name="Chen R."/>
            <person name="Cree A."/>
            <person name="Gunaratne P."/>
            <person name="Havlak P."/>
            <person name="Hodgson A."/>
            <person name="Metzker M.L."/>
            <person name="Richards S."/>
            <person name="Scott G."/>
            <person name="Steffen D."/>
            <person name="Sodergren E."/>
            <person name="Wheeler D.A."/>
            <person name="Worley K.C."/>
            <person name="Ainscough R."/>
            <person name="Ambrose K.D."/>
            <person name="Ansari-Lari M.A."/>
            <person name="Aradhya S."/>
            <person name="Ashwell R.I."/>
            <person name="Babbage A.K."/>
            <person name="Bagguley C.L."/>
            <person name="Ballabio A."/>
            <person name="Banerjee R."/>
            <person name="Barker G.E."/>
            <person name="Barlow K.F."/>
            <person name="Barrett I.P."/>
            <person name="Bates K.N."/>
            <person name="Beare D.M."/>
            <person name="Beasley H."/>
            <person name="Beasley O."/>
            <person name="Beck A."/>
            <person name="Bethel G."/>
            <person name="Blechschmidt K."/>
            <person name="Brady N."/>
            <person name="Bray-Allen S."/>
            <person name="Bridgeman A.M."/>
            <person name="Brown A.J."/>
            <person name="Brown M.J."/>
            <person name="Bonnin D."/>
            <person name="Bruford E.A."/>
            <person name="Buhay C."/>
            <person name="Burch P."/>
            <person name="Burford D."/>
            <person name="Burgess J."/>
            <person name="Burrill W."/>
            <person name="Burton J."/>
            <person name="Bye J.M."/>
            <person name="Carder C."/>
            <person name="Carrel L."/>
            <person name="Chako J."/>
            <person name="Chapman J.C."/>
            <person name="Chavez D."/>
            <person name="Chen E."/>
            <person name="Chen G."/>
            <person name="Chen Y."/>
            <person name="Chen Z."/>
            <person name="Chinault C."/>
            <person name="Ciccodicola A."/>
            <person name="Clark S.Y."/>
            <person name="Clarke G."/>
            <person name="Clee C.M."/>
            <person name="Clegg S."/>
            <person name="Clerc-Blankenburg K."/>
            <person name="Clifford K."/>
            <person name="Cobley V."/>
            <person name="Cole C.G."/>
            <person name="Conquer J.S."/>
            <person name="Corby N."/>
            <person name="Connor R.E."/>
            <person name="David R."/>
            <person name="Davies J."/>
            <person name="Davis C."/>
            <person name="Davis J."/>
            <person name="Delgado O."/>
            <person name="Deshazo D."/>
            <person name="Dhami P."/>
            <person name="Ding Y."/>
            <person name="Dinh H."/>
            <person name="Dodsworth S."/>
            <person name="Draper H."/>
            <person name="Dugan-Rocha S."/>
            <person name="Dunham A."/>
            <person name="Dunn M."/>
            <person name="Durbin K.J."/>
            <person name="Dutta I."/>
            <person name="Eades T."/>
            <person name="Ellwood M."/>
            <person name="Emery-Cohen A."/>
            <person name="Errington H."/>
            <person name="Evans K.L."/>
            <person name="Faulkner L."/>
            <person name="Francis F."/>
            <person name="Frankland J."/>
            <person name="Fraser A.E."/>
            <person name="Galgoczy P."/>
            <person name="Gilbert J."/>
            <person name="Gill R."/>
            <person name="Gloeckner G."/>
            <person name="Gregory S.G."/>
            <person name="Gribble S."/>
            <person name="Griffiths C."/>
            <person name="Grocock R."/>
            <person name="Gu Y."/>
            <person name="Gwilliam R."/>
            <person name="Hamilton C."/>
            <person name="Hart E.A."/>
            <person name="Hawes A."/>
            <person name="Heath P.D."/>
            <person name="Heitmann K."/>
            <person name="Hennig S."/>
            <person name="Hernandez J."/>
            <person name="Hinzmann B."/>
            <person name="Ho S."/>
            <person name="Hoffs M."/>
            <person name="Howden P.J."/>
            <person name="Huckle E.J."/>
            <person name="Hume J."/>
            <person name="Hunt P.J."/>
            <person name="Hunt A.R."/>
            <person name="Isherwood J."/>
            <person name="Jacob L."/>
            <person name="Johnson D."/>
            <person name="Jones S."/>
            <person name="de Jong P.J."/>
            <person name="Joseph S.S."/>
            <person name="Keenan S."/>
            <person name="Kelly S."/>
            <person name="Kershaw J.K."/>
            <person name="Khan Z."/>
            <person name="Kioschis P."/>
            <person name="Klages S."/>
            <person name="Knights A.J."/>
            <person name="Kosiura A."/>
            <person name="Kovar-Smith C."/>
            <person name="Laird G.K."/>
            <person name="Langford C."/>
            <person name="Lawlor S."/>
            <person name="Leversha M."/>
            <person name="Lewis L."/>
            <person name="Liu W."/>
            <person name="Lloyd C."/>
            <person name="Lloyd D.M."/>
            <person name="Loulseged H."/>
            <person name="Loveland J.E."/>
            <person name="Lovell J.D."/>
            <person name="Lozado R."/>
            <person name="Lu J."/>
            <person name="Lyne R."/>
            <person name="Ma J."/>
            <person name="Maheshwari M."/>
            <person name="Matthews L.H."/>
            <person name="McDowall J."/>
            <person name="McLaren S."/>
            <person name="McMurray A."/>
            <person name="Meidl P."/>
            <person name="Meitinger T."/>
            <person name="Milne S."/>
            <person name="Miner G."/>
            <person name="Mistry S.L."/>
            <person name="Morgan M."/>
            <person name="Morris S."/>
            <person name="Mueller I."/>
            <person name="Mullikin J.C."/>
            <person name="Nguyen N."/>
            <person name="Nordsiek G."/>
            <person name="Nyakatura G."/>
            <person name="O'dell C.N."/>
            <person name="Okwuonu G."/>
            <person name="Palmer S."/>
            <person name="Pandian R."/>
            <person name="Parker D."/>
            <person name="Parrish J."/>
            <person name="Pasternak S."/>
            <person name="Patel D."/>
            <person name="Pearce A.V."/>
            <person name="Pearson D.M."/>
            <person name="Pelan S.E."/>
            <person name="Perez L."/>
            <person name="Porter K.M."/>
            <person name="Ramsey Y."/>
            <person name="Reichwald K."/>
            <person name="Rhodes S."/>
            <person name="Ridler K.A."/>
            <person name="Schlessinger D."/>
            <person name="Schueler M.G."/>
            <person name="Sehra H.K."/>
            <person name="Shaw-Smith C."/>
            <person name="Shen H."/>
            <person name="Sheridan E.M."/>
            <person name="Shownkeen R."/>
            <person name="Skuce C.D."/>
            <person name="Smith M.L."/>
            <person name="Sotheran E.C."/>
            <person name="Steingruber H.E."/>
            <person name="Steward C.A."/>
            <person name="Storey R."/>
            <person name="Swann R.M."/>
            <person name="Swarbreck D."/>
            <person name="Tabor P.E."/>
            <person name="Taudien S."/>
            <person name="Taylor T."/>
            <person name="Teague B."/>
            <person name="Thomas K."/>
            <person name="Thorpe A."/>
            <person name="Timms K."/>
            <person name="Tracey A."/>
            <person name="Trevanion S."/>
            <person name="Tromans A.C."/>
            <person name="d'Urso M."/>
            <person name="Verduzco D."/>
            <person name="Villasana D."/>
            <person name="Waldron L."/>
            <person name="Wall M."/>
            <person name="Wang Q."/>
            <person name="Warren J."/>
            <person name="Warry G.L."/>
            <person name="Wei X."/>
            <person name="West A."/>
            <person name="Whitehead S.L."/>
            <person name="Whiteley M.N."/>
            <person name="Wilkinson J.E."/>
            <person name="Willey D.L."/>
            <person name="Williams G."/>
            <person name="Williams L."/>
            <person name="Williamson A."/>
            <person name="Williamson H."/>
            <person name="Wilming L."/>
            <person name="Woodmansey R.L."/>
            <person name="Wray P.W."/>
            <person name="Yen J."/>
            <person name="Zhang J."/>
            <person name="Zhou J."/>
            <person name="Zoghbi H."/>
            <person name="Zorilla S."/>
            <person name="Buck D."/>
            <person name="Reinhardt R."/>
            <person name="Poustka A."/>
            <person name="Rosenthal A."/>
            <person name="Lehrach H."/>
            <person name="Meindl A."/>
            <person name="Minx P.J."/>
            <person name="Hillier L.W."/>
            <person name="Willard H.F."/>
            <person name="Wilson R.K."/>
            <person name="Waterston R.H."/>
            <person name="Rice C.M."/>
            <person name="Vaudin M."/>
            <person name="Coulson A."/>
            <person name="Nelson D.L."/>
            <person name="Weinstock G."/>
            <person name="Sulston J.E."/>
            <person name="Durbin R.M."/>
            <person name="Hubbard T."/>
            <person name="Gibbs R.A."/>
            <person name="Beck S."/>
            <person name="Rogers J."/>
            <person name="Bentley D.R."/>
        </authorList>
    </citation>
    <scope>NUCLEOTIDE SEQUENCE [LARGE SCALE GENOMIC DNA]</scope>
</reference>
<reference key="2">
    <citation type="submission" date="2005-07" db="EMBL/GenBank/DDBJ databases">
        <authorList>
            <person name="Mural R.J."/>
            <person name="Istrail S."/>
            <person name="Sutton G.G."/>
            <person name="Florea L."/>
            <person name="Halpern A.L."/>
            <person name="Mobarry C.M."/>
            <person name="Lippert R."/>
            <person name="Walenz B."/>
            <person name="Shatkay H."/>
            <person name="Dew I."/>
            <person name="Miller J.R."/>
            <person name="Flanigan M.J."/>
            <person name="Edwards N.J."/>
            <person name="Bolanos R."/>
            <person name="Fasulo D."/>
            <person name="Halldorsson B.V."/>
            <person name="Hannenhalli S."/>
            <person name="Turner R."/>
            <person name="Yooseph S."/>
            <person name="Lu F."/>
            <person name="Nusskern D.R."/>
            <person name="Shue B.C."/>
            <person name="Zheng X.H."/>
            <person name="Zhong F."/>
            <person name="Delcher A.L."/>
            <person name="Huson D.H."/>
            <person name="Kravitz S.A."/>
            <person name="Mouchard L."/>
            <person name="Reinert K."/>
            <person name="Remington K.A."/>
            <person name="Clark A.G."/>
            <person name="Waterman M.S."/>
            <person name="Eichler E.E."/>
            <person name="Adams M.D."/>
            <person name="Hunkapiller M.W."/>
            <person name="Myers E.W."/>
            <person name="Venter J.C."/>
        </authorList>
    </citation>
    <scope>NUCLEOTIDE SEQUENCE [LARGE SCALE GENOMIC DNA]</scope>
</reference>
<reference key="3">
    <citation type="journal article" date="2004" name="Genome Res.">
        <title>The status, quality, and expansion of the NIH full-length cDNA project: the Mammalian Gene Collection (MGC).</title>
        <authorList>
            <consortium name="The MGC Project Team"/>
        </authorList>
    </citation>
    <scope>NUCLEOTIDE SEQUENCE [LARGE SCALE MRNA] (ISOFORM 1)</scope>
    <source>
        <tissue>Brain</tissue>
    </source>
</reference>
<reference key="4">
    <citation type="submission" date="2003-04" db="EMBL/GenBank/DDBJ databases">
        <title>Full-length cDNA libraries and normalization.</title>
        <authorList>
            <person name="Li W.B."/>
            <person name="Gruber C."/>
            <person name="Jessee J."/>
            <person name="Polayes D."/>
        </authorList>
    </citation>
    <scope>NUCLEOTIDE SEQUENCE [LARGE SCALE MRNA] OF 1-146 (ISOFORM 2)</scope>
    <source>
        <tissue>Fetal brain</tissue>
    </source>
</reference>
<evidence type="ECO:0000255" key="1">
    <source>
        <dbReference type="PROSITE-ProRule" id="PRU00042"/>
    </source>
</evidence>
<evidence type="ECO:0000255" key="2">
    <source>
        <dbReference type="PROSITE-ProRule" id="PRU00119"/>
    </source>
</evidence>
<evidence type="ECO:0000303" key="3">
    <source ref="4"/>
</evidence>
<evidence type="ECO:0000305" key="4"/>
<accession>Q2M218</accession>
<accession>F8WAG4</accession>
<accession>Q5H8Z5</accession>
<gene>
    <name type="primary">ZNF630</name>
</gene>
<protein>
    <recommendedName>
        <fullName>Zinc finger protein 630</fullName>
    </recommendedName>
</protein>
<feature type="chain" id="PRO_0000234603" description="Zinc finger protein 630">
    <location>
        <begin position="1"/>
        <end position="657"/>
    </location>
</feature>
<feature type="domain" description="KRAB" evidence="2">
    <location>
        <begin position="8"/>
        <end position="79"/>
    </location>
</feature>
<feature type="zinc finger region" description="C2H2-type 1" evidence="1">
    <location>
        <begin position="263"/>
        <end position="285"/>
    </location>
</feature>
<feature type="zinc finger region" description="C2H2-type 2" evidence="1">
    <location>
        <begin position="291"/>
        <end position="313"/>
    </location>
</feature>
<feature type="zinc finger region" description="C2H2-type 3; degenerate" evidence="1">
    <location>
        <begin position="319"/>
        <end position="341"/>
    </location>
</feature>
<feature type="zinc finger region" description="C2H2-type 4" evidence="1">
    <location>
        <begin position="347"/>
        <end position="369"/>
    </location>
</feature>
<feature type="zinc finger region" description="C2H2-type 5" evidence="1">
    <location>
        <begin position="375"/>
        <end position="397"/>
    </location>
</feature>
<feature type="zinc finger region" description="C2H2-type 6" evidence="1">
    <location>
        <begin position="403"/>
        <end position="425"/>
    </location>
</feature>
<feature type="zinc finger region" description="C2H2-type 7" evidence="1">
    <location>
        <begin position="431"/>
        <end position="453"/>
    </location>
</feature>
<feature type="zinc finger region" description="C2H2-type 8" evidence="1">
    <location>
        <begin position="459"/>
        <end position="481"/>
    </location>
</feature>
<feature type="zinc finger region" description="C2H2-type 9" evidence="1">
    <location>
        <begin position="487"/>
        <end position="509"/>
    </location>
</feature>
<feature type="zinc finger region" description="C2H2-type 10" evidence="1">
    <location>
        <begin position="515"/>
        <end position="537"/>
    </location>
</feature>
<feature type="zinc finger region" description="C2H2-type 11" evidence="1">
    <location>
        <begin position="543"/>
        <end position="565"/>
    </location>
</feature>
<feature type="zinc finger region" description="C2H2-type 12" evidence="1">
    <location>
        <begin position="571"/>
        <end position="593"/>
    </location>
</feature>
<feature type="zinc finger region" description="C2H2-type 13; degenerate" evidence="1">
    <location>
        <begin position="599"/>
        <end position="621"/>
    </location>
</feature>
<feature type="zinc finger region" description="C2H2-type 14; degenerate" evidence="1">
    <location>
        <begin position="627"/>
        <end position="649"/>
    </location>
</feature>
<feature type="splice variant" id="VSP_046855" description="In isoform 2." evidence="3">
    <location>
        <begin position="7"/>
        <end position="20"/>
    </location>
</feature>
<feature type="sequence conflict" description="In Ref. 4; BX419623." evidence="4" ref="4">
    <original>T</original>
    <variation>H</variation>
    <location>
        <position position="146"/>
    </location>
</feature>
<sequence length="657" mass="76094">MIESQEPVTFEDVAVDFTQEEWQQLNPAQKTLHRDVMLETYNHLVSVGCSGIKPDVIFKLEHGKDPWIIESELSRWIYPDRVKGLESSQQIISGELLFQREILERAPKDNSLYSVLKIWHIDNQMDRYQGNQDRVLRQVTVISRETLTDEMGSKYSAFGKMFNRCTDLAPLSQKFHKFDSCENSLKSNSDLLNYNRSYARKNPTKRFRCGRPPKYNASCSVPEKEGFIHTGMEPYGDSQCEKVLSHKQAHVQYKKFQAREKPNVCSMCGKAFIKKSQLIIHQRIHTGEKPYVCGDCRKAFSEKSHLIVHQRIHTGEKPYECTKYGRAFSRKSPFTVHQRVHTGEKPYECFECPKAFSQKSHLIIHQRVHTREKPFECSECRKAFCEMSHLFIHQITHTGKKPYECTECGKTFPRKTQLIIHQRTHTGEKPYKCGECGKTFCQQSHLIGHQRIHTGEKPYVCTDCGKAFSQKSHLTGHQRLHTGEKPYMCTECGKSFSQKSPLIIHQRIHTGEKPYQCGECGKTFSQKSLLIIHLRVHTGEKPYECTECGRAFSLKSHLILHQRGHTGEKPYECSECGKAFCGKSPLIIHQKTHPREKTPECAESGMTFFWKSQMITYQRRHTGEKPSRCSDCGKAFCQHVYFTGHQNPYRKDTLYIC</sequence>
<dbReference type="EMBL" id="Z98304">
    <property type="status" value="NOT_ANNOTATED_CDS"/>
    <property type="molecule type" value="Genomic_DNA"/>
</dbReference>
<dbReference type="EMBL" id="CH471164">
    <property type="protein sequence ID" value="EAW59337.1"/>
    <property type="molecule type" value="Genomic_DNA"/>
</dbReference>
<dbReference type="EMBL" id="BC112139">
    <property type="protein sequence ID" value="AAI12140.3"/>
    <property type="molecule type" value="mRNA"/>
</dbReference>
<dbReference type="EMBL" id="BX419623">
    <property type="status" value="NOT_ANNOTATED_CDS"/>
    <property type="molecule type" value="mRNA"/>
</dbReference>
<dbReference type="CCDS" id="CCDS35237.2">
    <molecule id="Q2M218-1"/>
</dbReference>
<dbReference type="RefSeq" id="NP_001032824.2">
    <molecule id="Q2M218-1"/>
    <property type="nucleotide sequence ID" value="NM_001037735.4"/>
</dbReference>
<dbReference type="RefSeq" id="NP_001177184.1">
    <molecule id="Q2M218-2"/>
    <property type="nucleotide sequence ID" value="NM_001190255.3"/>
</dbReference>
<dbReference type="RefSeq" id="NP_001269130.1">
    <molecule id="Q2M218-1"/>
    <property type="nucleotide sequence ID" value="NM_001282201.2"/>
</dbReference>
<dbReference type="RefSeq" id="NP_001269131.1">
    <property type="nucleotide sequence ID" value="NM_001282202.1"/>
</dbReference>
<dbReference type="SMR" id="Q2M218"/>
<dbReference type="STRING" id="9606.ENSP00000354683"/>
<dbReference type="iPTMnet" id="Q2M218"/>
<dbReference type="PhosphoSitePlus" id="Q2M218"/>
<dbReference type="BioMuta" id="ZNF630"/>
<dbReference type="DMDM" id="97219357"/>
<dbReference type="jPOST" id="Q2M218"/>
<dbReference type="MassIVE" id="Q2M218"/>
<dbReference type="PaxDb" id="9606-ENSP00000393163"/>
<dbReference type="PeptideAtlas" id="Q2M218"/>
<dbReference type="ProteomicsDB" id="30492"/>
<dbReference type="ProteomicsDB" id="61344">
    <molecule id="Q2M218-1"/>
</dbReference>
<dbReference type="Antibodypedia" id="25543">
    <property type="antibodies" value="51 antibodies from 14 providers"/>
</dbReference>
<dbReference type="DNASU" id="57232"/>
<dbReference type="Ensembl" id="ENST00000276054.9">
    <molecule id="Q2M218-1"/>
    <property type="protein sequence ID" value="ENSP00000354683.4"/>
    <property type="gene ID" value="ENSG00000221994.12"/>
</dbReference>
<dbReference type="Ensembl" id="ENST00000409324.7">
    <molecule id="Q2M218-1"/>
    <property type="protein sequence ID" value="ENSP00000386393.3"/>
    <property type="gene ID" value="ENSG00000221994.12"/>
</dbReference>
<dbReference type="GeneID" id="57232"/>
<dbReference type="KEGG" id="hsa:57232"/>
<dbReference type="MANE-Select" id="ENST00000276054.9">
    <property type="protein sequence ID" value="ENSP00000354683.4"/>
    <property type="RefSeq nucleotide sequence ID" value="NM_001282201.2"/>
    <property type="RefSeq protein sequence ID" value="NP_001269130.1"/>
</dbReference>
<dbReference type="UCSC" id="uc004div.5">
    <molecule id="Q2M218-1"/>
    <property type="organism name" value="human"/>
</dbReference>
<dbReference type="AGR" id="HGNC:28855"/>
<dbReference type="CTD" id="57232"/>
<dbReference type="DisGeNET" id="57232"/>
<dbReference type="GeneCards" id="ZNF630"/>
<dbReference type="HGNC" id="HGNC:28855">
    <property type="gene designation" value="ZNF630"/>
</dbReference>
<dbReference type="HPA" id="ENSG00000221994">
    <property type="expression patterns" value="Low tissue specificity"/>
</dbReference>
<dbReference type="MIM" id="300819">
    <property type="type" value="gene"/>
</dbReference>
<dbReference type="neXtProt" id="NX_Q2M218"/>
<dbReference type="OpenTargets" id="ENSG00000221994"/>
<dbReference type="PharmGKB" id="PA134889031"/>
<dbReference type="VEuPathDB" id="HostDB:ENSG00000221994"/>
<dbReference type="eggNOG" id="KOG1721">
    <property type="taxonomic scope" value="Eukaryota"/>
</dbReference>
<dbReference type="GeneTree" id="ENSGT00940000163698"/>
<dbReference type="InParanoid" id="Q2M218"/>
<dbReference type="OMA" id="YTGMKPC"/>
<dbReference type="OrthoDB" id="9654818at2759"/>
<dbReference type="PAN-GO" id="Q2M218">
    <property type="GO annotations" value="4 GO annotations based on evolutionary models"/>
</dbReference>
<dbReference type="PhylomeDB" id="Q2M218"/>
<dbReference type="TreeFam" id="TF337898"/>
<dbReference type="PathwayCommons" id="Q2M218"/>
<dbReference type="BioGRID-ORCS" id="57232">
    <property type="hits" value="17 hits in 791 CRISPR screens"/>
</dbReference>
<dbReference type="GenomeRNAi" id="57232"/>
<dbReference type="Pharos" id="Q2M218">
    <property type="development level" value="Tdark"/>
</dbReference>
<dbReference type="PRO" id="PR:Q2M218"/>
<dbReference type="Proteomes" id="UP000005640">
    <property type="component" value="Chromosome X"/>
</dbReference>
<dbReference type="RNAct" id="Q2M218">
    <property type="molecule type" value="protein"/>
</dbReference>
<dbReference type="Bgee" id="ENSG00000221994">
    <property type="expression patterns" value="Expressed in primordial germ cell in gonad and 123 other cell types or tissues"/>
</dbReference>
<dbReference type="ExpressionAtlas" id="Q2M218">
    <property type="expression patterns" value="baseline and differential"/>
</dbReference>
<dbReference type="GO" id="GO:0005634">
    <property type="term" value="C:nucleus"/>
    <property type="evidence" value="ECO:0000318"/>
    <property type="project" value="GO_Central"/>
</dbReference>
<dbReference type="GO" id="GO:0000981">
    <property type="term" value="F:DNA-binding transcription factor activity, RNA polymerase II-specific"/>
    <property type="evidence" value="ECO:0000318"/>
    <property type="project" value="GO_Central"/>
</dbReference>
<dbReference type="GO" id="GO:0000978">
    <property type="term" value="F:RNA polymerase II cis-regulatory region sequence-specific DNA binding"/>
    <property type="evidence" value="ECO:0000318"/>
    <property type="project" value="GO_Central"/>
</dbReference>
<dbReference type="GO" id="GO:0008270">
    <property type="term" value="F:zinc ion binding"/>
    <property type="evidence" value="ECO:0007669"/>
    <property type="project" value="UniProtKB-KW"/>
</dbReference>
<dbReference type="GO" id="GO:0006357">
    <property type="term" value="P:regulation of transcription by RNA polymerase II"/>
    <property type="evidence" value="ECO:0000318"/>
    <property type="project" value="GO_Central"/>
</dbReference>
<dbReference type="CDD" id="cd07765">
    <property type="entry name" value="KRAB_A-box"/>
    <property type="match status" value="1"/>
</dbReference>
<dbReference type="FunFam" id="3.30.160.60:FF:000029">
    <property type="entry name" value="GLI family zinc finger 4"/>
    <property type="match status" value="2"/>
</dbReference>
<dbReference type="FunFam" id="3.30.160.60:FF:000478">
    <property type="entry name" value="Zinc finger protein 133"/>
    <property type="match status" value="2"/>
</dbReference>
<dbReference type="FunFam" id="3.30.160.60:FF:000759">
    <property type="entry name" value="zinc finger protein 16"/>
    <property type="match status" value="1"/>
</dbReference>
<dbReference type="FunFam" id="3.30.160.60:FF:000053">
    <property type="entry name" value="zinc finger protein 182 isoform X1"/>
    <property type="match status" value="1"/>
</dbReference>
<dbReference type="FunFam" id="3.30.160.60:FF:000295">
    <property type="entry name" value="zinc finger protein 19"/>
    <property type="match status" value="2"/>
</dbReference>
<dbReference type="FunFam" id="3.30.160.60:FF:002343">
    <property type="entry name" value="Zinc finger protein 33A"/>
    <property type="match status" value="1"/>
</dbReference>
<dbReference type="FunFam" id="3.30.160.60:FF:000016">
    <property type="entry name" value="zinc finger protein 37 homolog"/>
    <property type="match status" value="1"/>
</dbReference>
<dbReference type="FunFam" id="3.30.160.60:FF:002090">
    <property type="entry name" value="Zinc finger protein 473"/>
    <property type="match status" value="1"/>
</dbReference>
<dbReference type="FunFam" id="3.30.160.60:FF:001745">
    <property type="entry name" value="Zinc finger protein 658"/>
    <property type="match status" value="1"/>
</dbReference>
<dbReference type="Gene3D" id="6.10.140.140">
    <property type="match status" value="1"/>
</dbReference>
<dbReference type="Gene3D" id="3.30.160.60">
    <property type="entry name" value="Classic Zinc Finger"/>
    <property type="match status" value="14"/>
</dbReference>
<dbReference type="InterPro" id="IPR001909">
    <property type="entry name" value="KRAB"/>
</dbReference>
<dbReference type="InterPro" id="IPR036051">
    <property type="entry name" value="KRAB_dom_sf"/>
</dbReference>
<dbReference type="InterPro" id="IPR036236">
    <property type="entry name" value="Znf_C2H2_sf"/>
</dbReference>
<dbReference type="InterPro" id="IPR013087">
    <property type="entry name" value="Znf_C2H2_type"/>
</dbReference>
<dbReference type="PANTHER" id="PTHR23226">
    <property type="entry name" value="ZINC FINGER AND SCAN DOMAIN-CONTAINING"/>
    <property type="match status" value="1"/>
</dbReference>
<dbReference type="PANTHER" id="PTHR23226:SF366">
    <property type="entry name" value="ZINC FINGER PROTEIN ZFP2"/>
    <property type="match status" value="1"/>
</dbReference>
<dbReference type="Pfam" id="PF01352">
    <property type="entry name" value="KRAB"/>
    <property type="match status" value="1"/>
</dbReference>
<dbReference type="Pfam" id="PF00096">
    <property type="entry name" value="zf-C2H2"/>
    <property type="match status" value="11"/>
</dbReference>
<dbReference type="SMART" id="SM00349">
    <property type="entry name" value="KRAB"/>
    <property type="match status" value="1"/>
</dbReference>
<dbReference type="SMART" id="SM00355">
    <property type="entry name" value="ZnF_C2H2"/>
    <property type="match status" value="13"/>
</dbReference>
<dbReference type="SUPFAM" id="SSF57667">
    <property type="entry name" value="beta-beta-alpha zinc fingers"/>
    <property type="match status" value="8"/>
</dbReference>
<dbReference type="SUPFAM" id="SSF109640">
    <property type="entry name" value="KRAB domain (Kruppel-associated box)"/>
    <property type="match status" value="1"/>
</dbReference>
<dbReference type="PROSITE" id="PS50805">
    <property type="entry name" value="KRAB"/>
    <property type="match status" value="1"/>
</dbReference>
<dbReference type="PROSITE" id="PS00028">
    <property type="entry name" value="ZINC_FINGER_C2H2_1"/>
    <property type="match status" value="11"/>
</dbReference>
<dbReference type="PROSITE" id="PS50157">
    <property type="entry name" value="ZINC_FINGER_C2H2_2"/>
    <property type="match status" value="13"/>
</dbReference>